<proteinExistence type="inferred from homology"/>
<name>Y1582_BACAN</name>
<protein>
    <recommendedName>
        <fullName evidence="1">UPF0398 protein BA_1582/GBAA_1582/BAS1466</fullName>
    </recommendedName>
</protein>
<comment type="similarity">
    <text evidence="1">Belongs to the UPF0398 family.</text>
</comment>
<reference key="1">
    <citation type="journal article" date="2003" name="Nature">
        <title>The genome sequence of Bacillus anthracis Ames and comparison to closely related bacteria.</title>
        <authorList>
            <person name="Read T.D."/>
            <person name="Peterson S.N."/>
            <person name="Tourasse N.J."/>
            <person name="Baillie L.W."/>
            <person name="Paulsen I.T."/>
            <person name="Nelson K.E."/>
            <person name="Tettelin H."/>
            <person name="Fouts D.E."/>
            <person name="Eisen J.A."/>
            <person name="Gill S.R."/>
            <person name="Holtzapple E.K."/>
            <person name="Okstad O.A."/>
            <person name="Helgason E."/>
            <person name="Rilstone J."/>
            <person name="Wu M."/>
            <person name="Kolonay J.F."/>
            <person name="Beanan M.J."/>
            <person name="Dodson R.J."/>
            <person name="Brinkac L.M."/>
            <person name="Gwinn M.L."/>
            <person name="DeBoy R.T."/>
            <person name="Madpu R."/>
            <person name="Daugherty S.C."/>
            <person name="Durkin A.S."/>
            <person name="Haft D.H."/>
            <person name="Nelson W.C."/>
            <person name="Peterson J.D."/>
            <person name="Pop M."/>
            <person name="Khouri H.M."/>
            <person name="Radune D."/>
            <person name="Benton J.L."/>
            <person name="Mahamoud Y."/>
            <person name="Jiang L."/>
            <person name="Hance I.R."/>
            <person name="Weidman J.F."/>
            <person name="Berry K.J."/>
            <person name="Plaut R.D."/>
            <person name="Wolf A.M."/>
            <person name="Watkins K.L."/>
            <person name="Nierman W.C."/>
            <person name="Hazen A."/>
            <person name="Cline R.T."/>
            <person name="Redmond C."/>
            <person name="Thwaite J.E."/>
            <person name="White O."/>
            <person name="Salzberg S.L."/>
            <person name="Thomason B."/>
            <person name="Friedlander A.M."/>
            <person name="Koehler T.M."/>
            <person name="Hanna P.C."/>
            <person name="Kolstoe A.-B."/>
            <person name="Fraser C.M."/>
        </authorList>
    </citation>
    <scope>NUCLEOTIDE SEQUENCE [LARGE SCALE GENOMIC DNA]</scope>
    <source>
        <strain>Ames / isolate Porton</strain>
    </source>
</reference>
<reference key="2">
    <citation type="submission" date="2004-01" db="EMBL/GenBank/DDBJ databases">
        <title>Complete genome sequence of Bacillus anthracis Sterne.</title>
        <authorList>
            <person name="Brettin T.S."/>
            <person name="Bruce D."/>
            <person name="Challacombe J.F."/>
            <person name="Gilna P."/>
            <person name="Han C."/>
            <person name="Hill K."/>
            <person name="Hitchcock P."/>
            <person name="Jackson P."/>
            <person name="Keim P."/>
            <person name="Longmire J."/>
            <person name="Lucas S."/>
            <person name="Okinaka R."/>
            <person name="Richardson P."/>
            <person name="Rubin E."/>
            <person name="Tice H."/>
        </authorList>
    </citation>
    <scope>NUCLEOTIDE SEQUENCE [LARGE SCALE GENOMIC DNA]</scope>
    <source>
        <strain>Sterne</strain>
    </source>
</reference>
<reference key="3">
    <citation type="journal article" date="2009" name="J. Bacteriol.">
        <title>The complete genome sequence of Bacillus anthracis Ames 'Ancestor'.</title>
        <authorList>
            <person name="Ravel J."/>
            <person name="Jiang L."/>
            <person name="Stanley S.T."/>
            <person name="Wilson M.R."/>
            <person name="Decker R.S."/>
            <person name="Read T.D."/>
            <person name="Worsham P."/>
            <person name="Keim P.S."/>
            <person name="Salzberg S.L."/>
            <person name="Fraser-Liggett C.M."/>
            <person name="Rasko D.A."/>
        </authorList>
    </citation>
    <scope>NUCLEOTIDE SEQUENCE [LARGE SCALE GENOMIC DNA]</scope>
    <source>
        <strain>Ames ancestor</strain>
    </source>
</reference>
<keyword id="KW-1185">Reference proteome</keyword>
<gene>
    <name type="ordered locus">BA_1582</name>
    <name type="ordered locus">GBAA_1582</name>
    <name type="ordered locus">BAS1466</name>
</gene>
<accession>Q81SR4</accession>
<accession>Q6I0Z6</accession>
<accession>Q6KUV0</accession>
<sequence length="184" mass="21448">MKVIAVTGYKPFELGIFKNDHPGVECIKKALRRKLTAFVEGGLEWVIISGQLGVELWTAEVVFEIQVEYPDLKLAVFTPFLEQEEGWKEDNREYYEFILSQADHVDSITKRKYESPEQFKLKNQIFIEKSDALLAVYDEEKPGSPKYIVEAAKKKGEIENYHSYFILFSDLQDIIEEEQWNNAE</sequence>
<organism>
    <name type="scientific">Bacillus anthracis</name>
    <dbReference type="NCBI Taxonomy" id="1392"/>
    <lineage>
        <taxon>Bacteria</taxon>
        <taxon>Bacillati</taxon>
        <taxon>Bacillota</taxon>
        <taxon>Bacilli</taxon>
        <taxon>Bacillales</taxon>
        <taxon>Bacillaceae</taxon>
        <taxon>Bacillus</taxon>
        <taxon>Bacillus cereus group</taxon>
    </lineage>
</organism>
<evidence type="ECO:0000255" key="1">
    <source>
        <dbReference type="HAMAP-Rule" id="MF_01575"/>
    </source>
</evidence>
<feature type="chain" id="PRO_0000267148" description="UPF0398 protein BA_1582/GBAA_1582/BAS1466">
    <location>
        <begin position="1"/>
        <end position="184"/>
    </location>
</feature>
<dbReference type="EMBL" id="AE016879">
    <property type="protein sequence ID" value="AAP25517.1"/>
    <property type="molecule type" value="Genomic_DNA"/>
</dbReference>
<dbReference type="EMBL" id="AE017225">
    <property type="protein sequence ID" value="AAT53786.1"/>
    <property type="molecule type" value="Genomic_DNA"/>
</dbReference>
<dbReference type="EMBL" id="AE017334">
    <property type="protein sequence ID" value="AAT30681.1"/>
    <property type="molecule type" value="Genomic_DNA"/>
</dbReference>
<dbReference type="RefSeq" id="NP_844031.1">
    <property type="nucleotide sequence ID" value="NC_003997.3"/>
</dbReference>
<dbReference type="RefSeq" id="WP_000862924.1">
    <property type="nucleotide sequence ID" value="NZ_WXXJ01000001.1"/>
</dbReference>
<dbReference type="RefSeq" id="YP_027735.1">
    <property type="nucleotide sequence ID" value="NC_005945.1"/>
</dbReference>
<dbReference type="SMR" id="Q81SR4"/>
<dbReference type="IntAct" id="Q81SR4">
    <property type="interactions" value="2"/>
</dbReference>
<dbReference type="STRING" id="261594.GBAA_1582"/>
<dbReference type="DNASU" id="1087220"/>
<dbReference type="GeneID" id="45021552"/>
<dbReference type="KEGG" id="ban:BA_1582"/>
<dbReference type="KEGG" id="bar:GBAA_1582"/>
<dbReference type="KEGG" id="bat:BAS1466"/>
<dbReference type="PATRIC" id="fig|198094.11.peg.1551"/>
<dbReference type="eggNOG" id="COG4474">
    <property type="taxonomic scope" value="Bacteria"/>
</dbReference>
<dbReference type="HOGENOM" id="CLU_105319_0_0_9"/>
<dbReference type="OMA" id="LEWVITG"/>
<dbReference type="OrthoDB" id="2301957at2"/>
<dbReference type="Proteomes" id="UP000000427">
    <property type="component" value="Chromosome"/>
</dbReference>
<dbReference type="Proteomes" id="UP000000594">
    <property type="component" value="Chromosome"/>
</dbReference>
<dbReference type="Gene3D" id="3.40.50.450">
    <property type="match status" value="1"/>
</dbReference>
<dbReference type="HAMAP" id="MF_01575">
    <property type="entry name" value="UPF0398"/>
    <property type="match status" value="1"/>
</dbReference>
<dbReference type="InterPro" id="IPR010697">
    <property type="entry name" value="YspA"/>
</dbReference>
<dbReference type="NCBIfam" id="NF010181">
    <property type="entry name" value="PRK13660.1"/>
    <property type="match status" value="1"/>
</dbReference>
<dbReference type="PANTHER" id="PTHR38440:SF1">
    <property type="entry name" value="UPF0398 PROTEIN SPR0331"/>
    <property type="match status" value="1"/>
</dbReference>
<dbReference type="PANTHER" id="PTHR38440">
    <property type="entry name" value="UPF0398 PROTEIN YPSA"/>
    <property type="match status" value="1"/>
</dbReference>
<dbReference type="Pfam" id="PF06908">
    <property type="entry name" value="YpsA"/>
    <property type="match status" value="1"/>
</dbReference>
<dbReference type="PIRSF" id="PIRSF021290">
    <property type="entry name" value="DUF1273"/>
    <property type="match status" value="1"/>
</dbReference>
<dbReference type="SUPFAM" id="SSF102405">
    <property type="entry name" value="MCP/YpsA-like"/>
    <property type="match status" value="1"/>
</dbReference>